<name>RL35_MARMM</name>
<keyword id="KW-1185">Reference proteome</keyword>
<keyword id="KW-0687">Ribonucleoprotein</keyword>
<keyword id="KW-0689">Ribosomal protein</keyword>
<accession>Q0ATG3</accession>
<organism>
    <name type="scientific">Maricaulis maris (strain MCS10)</name>
    <name type="common">Caulobacter maris</name>
    <dbReference type="NCBI Taxonomy" id="394221"/>
    <lineage>
        <taxon>Bacteria</taxon>
        <taxon>Pseudomonadati</taxon>
        <taxon>Pseudomonadota</taxon>
        <taxon>Alphaproteobacteria</taxon>
        <taxon>Maricaulales</taxon>
        <taxon>Maricaulaceae</taxon>
        <taxon>Maricaulis</taxon>
    </lineage>
</organism>
<comment type="similarity">
    <text evidence="1">Belongs to the bacterial ribosomal protein bL35 family.</text>
</comment>
<feature type="chain" id="PRO_1000050715" description="Large ribosomal subunit protein bL35">
    <location>
        <begin position="1"/>
        <end position="66"/>
    </location>
</feature>
<feature type="region of interest" description="Disordered" evidence="2">
    <location>
        <begin position="1"/>
        <end position="35"/>
    </location>
</feature>
<feature type="compositionally biased region" description="Basic residues" evidence="2">
    <location>
        <begin position="1"/>
        <end position="15"/>
    </location>
</feature>
<proteinExistence type="inferred from homology"/>
<protein>
    <recommendedName>
        <fullName evidence="1">Large ribosomal subunit protein bL35</fullName>
    </recommendedName>
    <alternativeName>
        <fullName evidence="3">50S ribosomal protein L35</fullName>
    </alternativeName>
</protein>
<gene>
    <name evidence="1" type="primary">rpmI</name>
    <name type="ordered locus">Mmar10_0128</name>
</gene>
<reference key="1">
    <citation type="submission" date="2006-08" db="EMBL/GenBank/DDBJ databases">
        <title>Complete sequence of Maricaulis maris MCS10.</title>
        <authorList>
            <consortium name="US DOE Joint Genome Institute"/>
            <person name="Copeland A."/>
            <person name="Lucas S."/>
            <person name="Lapidus A."/>
            <person name="Barry K."/>
            <person name="Detter J.C."/>
            <person name="Glavina del Rio T."/>
            <person name="Hammon N."/>
            <person name="Israni S."/>
            <person name="Dalin E."/>
            <person name="Tice H."/>
            <person name="Pitluck S."/>
            <person name="Saunders E."/>
            <person name="Brettin T."/>
            <person name="Bruce D."/>
            <person name="Han C."/>
            <person name="Tapia R."/>
            <person name="Gilna P."/>
            <person name="Schmutz J."/>
            <person name="Larimer F."/>
            <person name="Land M."/>
            <person name="Hauser L."/>
            <person name="Kyrpides N."/>
            <person name="Mikhailova N."/>
            <person name="Viollier P."/>
            <person name="Stephens C."/>
            <person name="Richardson P."/>
        </authorList>
    </citation>
    <scope>NUCLEOTIDE SEQUENCE [LARGE SCALE GENOMIC DNA]</scope>
    <source>
        <strain>MCS10</strain>
    </source>
</reference>
<evidence type="ECO:0000255" key="1">
    <source>
        <dbReference type="HAMAP-Rule" id="MF_00514"/>
    </source>
</evidence>
<evidence type="ECO:0000256" key="2">
    <source>
        <dbReference type="SAM" id="MobiDB-lite"/>
    </source>
</evidence>
<evidence type="ECO:0000305" key="3"/>
<dbReference type="EMBL" id="CP000449">
    <property type="protein sequence ID" value="ABI64424.1"/>
    <property type="molecule type" value="Genomic_DNA"/>
</dbReference>
<dbReference type="RefSeq" id="WP_011642071.1">
    <property type="nucleotide sequence ID" value="NC_008347.1"/>
</dbReference>
<dbReference type="SMR" id="Q0ATG3"/>
<dbReference type="STRING" id="394221.Mmar10_0128"/>
<dbReference type="KEGG" id="mmr:Mmar10_0128"/>
<dbReference type="eggNOG" id="COG0291">
    <property type="taxonomic scope" value="Bacteria"/>
</dbReference>
<dbReference type="HOGENOM" id="CLU_169643_2_1_5"/>
<dbReference type="OrthoDB" id="9804851at2"/>
<dbReference type="Proteomes" id="UP000001964">
    <property type="component" value="Chromosome"/>
</dbReference>
<dbReference type="GO" id="GO:0022625">
    <property type="term" value="C:cytosolic large ribosomal subunit"/>
    <property type="evidence" value="ECO:0007669"/>
    <property type="project" value="TreeGrafter"/>
</dbReference>
<dbReference type="GO" id="GO:0003735">
    <property type="term" value="F:structural constituent of ribosome"/>
    <property type="evidence" value="ECO:0007669"/>
    <property type="project" value="InterPro"/>
</dbReference>
<dbReference type="GO" id="GO:0006412">
    <property type="term" value="P:translation"/>
    <property type="evidence" value="ECO:0007669"/>
    <property type="project" value="UniProtKB-UniRule"/>
</dbReference>
<dbReference type="FunFam" id="4.10.410.60:FF:000001">
    <property type="entry name" value="50S ribosomal protein L35"/>
    <property type="match status" value="1"/>
</dbReference>
<dbReference type="Gene3D" id="4.10.410.60">
    <property type="match status" value="1"/>
</dbReference>
<dbReference type="HAMAP" id="MF_00514">
    <property type="entry name" value="Ribosomal_bL35"/>
    <property type="match status" value="1"/>
</dbReference>
<dbReference type="InterPro" id="IPR001706">
    <property type="entry name" value="Ribosomal_bL35"/>
</dbReference>
<dbReference type="InterPro" id="IPR021137">
    <property type="entry name" value="Ribosomal_bL35-like"/>
</dbReference>
<dbReference type="InterPro" id="IPR018265">
    <property type="entry name" value="Ribosomal_bL35_CS"/>
</dbReference>
<dbReference type="InterPro" id="IPR037229">
    <property type="entry name" value="Ribosomal_bL35_sf"/>
</dbReference>
<dbReference type="NCBIfam" id="TIGR00001">
    <property type="entry name" value="rpmI_bact"/>
    <property type="match status" value="1"/>
</dbReference>
<dbReference type="PANTHER" id="PTHR33343">
    <property type="entry name" value="54S RIBOSOMAL PROTEIN BL35M"/>
    <property type="match status" value="1"/>
</dbReference>
<dbReference type="PANTHER" id="PTHR33343:SF1">
    <property type="entry name" value="LARGE RIBOSOMAL SUBUNIT PROTEIN BL35M"/>
    <property type="match status" value="1"/>
</dbReference>
<dbReference type="Pfam" id="PF01632">
    <property type="entry name" value="Ribosomal_L35p"/>
    <property type="match status" value="1"/>
</dbReference>
<dbReference type="PRINTS" id="PR00064">
    <property type="entry name" value="RIBOSOMALL35"/>
</dbReference>
<dbReference type="SUPFAM" id="SSF143034">
    <property type="entry name" value="L35p-like"/>
    <property type="match status" value="1"/>
</dbReference>
<dbReference type="PROSITE" id="PS00936">
    <property type="entry name" value="RIBOSOMAL_L35"/>
    <property type="match status" value="1"/>
</dbReference>
<sequence length="66" mass="7307">MSKMKTKSGAKKRFKLTASGKVKAGQAGKRHGMIKRTPKQIRNKRGQVTLSPQDAKIVKKYLPNGL</sequence>